<dbReference type="EMBL" id="X59611">
    <property type="protein sequence ID" value="CAA42175.1"/>
    <property type="molecule type" value="Genomic_DNA"/>
</dbReference>
<dbReference type="PIR" id="S16477">
    <property type="entry name" value="S16477"/>
</dbReference>
<dbReference type="SMR" id="P33786"/>
<dbReference type="GO" id="GO:0005886">
    <property type="term" value="C:plasma membrane"/>
    <property type="evidence" value="ECO:0007669"/>
    <property type="project" value="UniProtKB-SubCell"/>
</dbReference>
<dbReference type="GO" id="GO:0003677">
    <property type="term" value="F:DNA binding"/>
    <property type="evidence" value="ECO:0007669"/>
    <property type="project" value="UniProtKB-KW"/>
</dbReference>
<dbReference type="GO" id="GO:0006355">
    <property type="term" value="P:regulation of DNA-templated transcription"/>
    <property type="evidence" value="ECO:0007669"/>
    <property type="project" value="InterPro"/>
</dbReference>
<dbReference type="CDD" id="cd06170">
    <property type="entry name" value="LuxR_C_like"/>
    <property type="match status" value="1"/>
</dbReference>
<dbReference type="Gene3D" id="1.10.10.10">
    <property type="entry name" value="Winged helix-like DNA-binding domain superfamily/Winged helix DNA-binding domain"/>
    <property type="match status" value="1"/>
</dbReference>
<dbReference type="InterPro" id="IPR016032">
    <property type="entry name" value="Sig_transdc_resp-reg_C-effctor"/>
</dbReference>
<dbReference type="InterPro" id="IPR000792">
    <property type="entry name" value="Tscrpt_reg_LuxR_C"/>
</dbReference>
<dbReference type="InterPro" id="IPR036388">
    <property type="entry name" value="WH-like_DNA-bd_sf"/>
</dbReference>
<dbReference type="SUPFAM" id="SSF46894">
    <property type="entry name" value="C-terminal effector domain of the bipartite response regulators"/>
    <property type="match status" value="1"/>
</dbReference>
<comment type="function">
    <text>This protein is essential for positively regulating the expression of transfer genes that are involved in the conjugal transfer of DNA between bacterial cells.</text>
</comment>
<comment type="subcellular location">
    <subcellularLocation>
        <location>Cell membrane</location>
        <topology>Peripheral membrane protein</topology>
    </subcellularLocation>
</comment>
<sequence>MTVVDPARFMYERNHFPSLTDKEFETLVLYCQMMNVQMVADYQNRKPDVIIKHLKSCRQKIGVESDFELYFIVINKFVNFERVFPELTSEQINILAAFSFYPKRSTIARRFDIYRCDIYDELIKIRNNLGIEDLESLRMLFFMKITVFL</sequence>
<keyword id="KW-0010">Activator</keyword>
<keyword id="KW-1003">Cell membrane</keyword>
<keyword id="KW-0184">Conjugation</keyword>
<keyword id="KW-0903">Direct protein sequencing</keyword>
<keyword id="KW-0238">DNA-binding</keyword>
<keyword id="KW-0472">Membrane</keyword>
<keyword id="KW-0614">Plasmid</keyword>
<keyword id="KW-0804">Transcription</keyword>
<keyword id="KW-0805">Transcription regulation</keyword>
<reference key="1">
    <citation type="journal article" date="1991" name="Mol. Microbiol.">
        <title>Characterization of the oriT region of the IncFV plasmid pED208.</title>
        <authorList>
            <person name="di Laurenzio L."/>
            <person name="Frost L.S."/>
            <person name="Finlay B.B."/>
            <person name="Paranchych W."/>
        </authorList>
    </citation>
    <scope>NUCLEOTIDE SEQUENCE [GENOMIC DNA]</scope>
    <scope>PROTEIN SEQUENCE OF 1-5</scope>
</reference>
<protein>
    <recommendedName>
        <fullName>Protein TraJ</fullName>
    </recommendedName>
</protein>
<name>TRAJ8_ECOLX</name>
<organism>
    <name type="scientific">Escherichia coli</name>
    <dbReference type="NCBI Taxonomy" id="562"/>
    <lineage>
        <taxon>Bacteria</taxon>
        <taxon>Pseudomonadati</taxon>
        <taxon>Pseudomonadota</taxon>
        <taxon>Gammaproteobacteria</taxon>
        <taxon>Enterobacterales</taxon>
        <taxon>Enterobacteriaceae</taxon>
        <taxon>Escherichia</taxon>
    </lineage>
</organism>
<feature type="chain" id="PRO_0000068463" description="Protein TraJ">
    <location>
        <begin position="1"/>
        <end position="149"/>
    </location>
</feature>
<gene>
    <name type="primary">traJ</name>
</gene>
<proteinExistence type="evidence at protein level"/>
<accession>P33786</accession>
<geneLocation type="plasmid">
    <name>IncFV pED208</name>
</geneLocation>